<name>CC124_DANRE</name>
<dbReference type="EMBL" id="AY398375">
    <property type="protein sequence ID" value="AAQ97808.1"/>
    <property type="molecule type" value="mRNA"/>
</dbReference>
<dbReference type="EMBL" id="BX119975">
    <property type="protein sequence ID" value="CAK04381.1"/>
    <property type="molecule type" value="Genomic_DNA"/>
</dbReference>
<dbReference type="EMBL" id="BC056579">
    <property type="protein sequence ID" value="AAH56579.1"/>
    <property type="molecule type" value="mRNA"/>
</dbReference>
<dbReference type="EMBL" id="BC066532">
    <property type="protein sequence ID" value="AAH66532.1"/>
    <property type="molecule type" value="mRNA"/>
</dbReference>
<dbReference type="RefSeq" id="NP_956859.1">
    <property type="nucleotide sequence ID" value="NM_200565.2"/>
</dbReference>
<dbReference type="SMR" id="Q6PHE8"/>
<dbReference type="FunCoup" id="Q6PHE8">
    <property type="interactions" value="998"/>
</dbReference>
<dbReference type="STRING" id="7955.ENSDARP00000063862"/>
<dbReference type="PaxDb" id="7955-ENSDARP00000063862"/>
<dbReference type="Ensembl" id="ENSDART00000063863">
    <property type="protein sequence ID" value="ENSDARP00000063862"/>
    <property type="gene ID" value="ENSDARG00000043502"/>
</dbReference>
<dbReference type="Ensembl" id="ENSDART00000188608">
    <property type="protein sequence ID" value="ENSDARP00000145529"/>
    <property type="gene ID" value="ENSDARG00000043502"/>
</dbReference>
<dbReference type="GeneID" id="393537"/>
<dbReference type="KEGG" id="dre:393537"/>
<dbReference type="AGR" id="ZFIN:ZDB-GENE-040426-1483"/>
<dbReference type="CTD" id="115098"/>
<dbReference type="ZFIN" id="ZDB-GENE-040426-1483">
    <property type="gene designation" value="ccdc124"/>
</dbReference>
<dbReference type="eggNOG" id="KOG3223">
    <property type="taxonomic scope" value="Eukaryota"/>
</dbReference>
<dbReference type="HOGENOM" id="CLU_069723_0_1_1"/>
<dbReference type="InParanoid" id="Q6PHE8"/>
<dbReference type="OMA" id="FEERMMP"/>
<dbReference type="OrthoDB" id="76412at2759"/>
<dbReference type="PhylomeDB" id="Q6PHE8"/>
<dbReference type="TreeFam" id="TF105913"/>
<dbReference type="PRO" id="PR:Q6PHE8"/>
<dbReference type="Proteomes" id="UP000000437">
    <property type="component" value="Chromosome 8"/>
</dbReference>
<dbReference type="Bgee" id="ENSDARG00000043502">
    <property type="expression patterns" value="Expressed in muscle tissue and 23 other cell types or tissues"/>
</dbReference>
<dbReference type="GO" id="GO:0005813">
    <property type="term" value="C:centrosome"/>
    <property type="evidence" value="ECO:0007669"/>
    <property type="project" value="UniProtKB-SubCell"/>
</dbReference>
<dbReference type="GO" id="GO:0005737">
    <property type="term" value="C:cytoplasm"/>
    <property type="evidence" value="ECO:0007669"/>
    <property type="project" value="UniProtKB-KW"/>
</dbReference>
<dbReference type="GO" id="GO:0030496">
    <property type="term" value="C:midbody"/>
    <property type="evidence" value="ECO:0007669"/>
    <property type="project" value="UniProtKB-SubCell"/>
</dbReference>
<dbReference type="GO" id="GO:0005634">
    <property type="term" value="C:nucleus"/>
    <property type="evidence" value="ECO:0000318"/>
    <property type="project" value="GO_Central"/>
</dbReference>
<dbReference type="GO" id="GO:0003713">
    <property type="term" value="F:transcription coactivator activity"/>
    <property type="evidence" value="ECO:0000318"/>
    <property type="project" value="GO_Central"/>
</dbReference>
<dbReference type="GO" id="GO:0006366">
    <property type="term" value="P:transcription by RNA polymerase II"/>
    <property type="evidence" value="ECO:0000318"/>
    <property type="project" value="GO_Central"/>
</dbReference>
<dbReference type="InterPro" id="IPR010422">
    <property type="entry name" value="Ccdc124/Oxs1"/>
</dbReference>
<dbReference type="InterPro" id="IPR054414">
    <property type="entry name" value="Ccdc124/Oxs1_C"/>
</dbReference>
<dbReference type="PANTHER" id="PTHR21680">
    <property type="entry name" value="COILED-COIL DOMAIN-CONTAINING PROTEIN 124"/>
    <property type="match status" value="1"/>
</dbReference>
<dbReference type="PANTHER" id="PTHR21680:SF0">
    <property type="entry name" value="COILED-COIL DOMAIN-CONTAINING PROTEIN 124"/>
    <property type="match status" value="1"/>
</dbReference>
<dbReference type="Pfam" id="PF06244">
    <property type="entry name" value="Ccdc124"/>
    <property type="match status" value="1"/>
</dbReference>
<feature type="chain" id="PRO_0000263738" description="Coiled-coil domain-containing protein 124">
    <location>
        <begin position="1"/>
        <end position="216"/>
    </location>
</feature>
<feature type="region of interest" description="Disordered" evidence="3">
    <location>
        <begin position="1"/>
        <end position="93"/>
    </location>
</feature>
<feature type="region of interest" description="Disordered" evidence="3">
    <location>
        <begin position="194"/>
        <end position="216"/>
    </location>
</feature>
<feature type="coiled-coil region" evidence="2">
    <location>
        <begin position="18"/>
        <end position="119"/>
    </location>
</feature>
<feature type="compositionally biased region" description="Basic and acidic residues" evidence="3">
    <location>
        <begin position="18"/>
        <end position="90"/>
    </location>
</feature>
<feature type="compositionally biased region" description="Polar residues" evidence="3">
    <location>
        <begin position="201"/>
        <end position="216"/>
    </location>
</feature>
<proteinExistence type="evidence at transcript level"/>
<accession>Q6PHE8</accession>
<sequence length="216" mass="25187">MPKKFQGENSKSATARARKAEAKAVADARKQKELEDALWEDNDKRVVKKEQRKDDKERKRLEALERKRENQRLLEEEDSKIKGKQTKEGPSKVTRAQIEETLQSKQNVKEIKEKEKSHLDVPLEENVNRIVPEEGTVEARTIEDAIAVLSTKEDLDRHPERRMKAAYTAFEEANMPRVKMENPNMRLSQLKQQLKKEWTKSPENPLNQRAASYNTK</sequence>
<gene>
    <name type="primary">ccdc124</name>
    <name type="ORF">si:ch211-200a16.3</name>
    <name type="ORF">zgc:65939</name>
    <name type="ORF">zgc:77492</name>
</gene>
<protein>
    <recommendedName>
        <fullName>Coiled-coil domain-containing protein 124</fullName>
    </recommendedName>
</protein>
<reference key="1">
    <citation type="journal article" date="2004" name="Proc. Natl. Acad. Sci. U.S.A.">
        <title>Hematopoietic gene expression profile in zebrafish kidney marrow.</title>
        <authorList>
            <person name="Song H.-D."/>
            <person name="Sun X.-J."/>
            <person name="Deng M."/>
            <person name="Zhang G.-W."/>
            <person name="Zhou Y."/>
            <person name="Wu X.-Y."/>
            <person name="Sheng Y."/>
            <person name="Chen Y."/>
            <person name="Ruan Z."/>
            <person name="Jiang C.-L."/>
            <person name="Fan H.-Y."/>
            <person name="Zon L.I."/>
            <person name="Kanki J.P."/>
            <person name="Liu T.X."/>
            <person name="Look A.T."/>
            <person name="Chen Z."/>
        </authorList>
    </citation>
    <scope>NUCLEOTIDE SEQUENCE [LARGE SCALE MRNA]</scope>
    <source>
        <tissue>Kidney marrow</tissue>
    </source>
</reference>
<reference key="2">
    <citation type="journal article" date="2013" name="Nature">
        <title>The zebrafish reference genome sequence and its relationship to the human genome.</title>
        <authorList>
            <person name="Howe K."/>
            <person name="Clark M.D."/>
            <person name="Torroja C.F."/>
            <person name="Torrance J."/>
            <person name="Berthelot C."/>
            <person name="Muffato M."/>
            <person name="Collins J.E."/>
            <person name="Humphray S."/>
            <person name="McLaren K."/>
            <person name="Matthews L."/>
            <person name="McLaren S."/>
            <person name="Sealy I."/>
            <person name="Caccamo M."/>
            <person name="Churcher C."/>
            <person name="Scott C."/>
            <person name="Barrett J.C."/>
            <person name="Koch R."/>
            <person name="Rauch G.J."/>
            <person name="White S."/>
            <person name="Chow W."/>
            <person name="Kilian B."/>
            <person name="Quintais L.T."/>
            <person name="Guerra-Assuncao J.A."/>
            <person name="Zhou Y."/>
            <person name="Gu Y."/>
            <person name="Yen J."/>
            <person name="Vogel J.H."/>
            <person name="Eyre T."/>
            <person name="Redmond S."/>
            <person name="Banerjee R."/>
            <person name="Chi J."/>
            <person name="Fu B."/>
            <person name="Langley E."/>
            <person name="Maguire S.F."/>
            <person name="Laird G.K."/>
            <person name="Lloyd D."/>
            <person name="Kenyon E."/>
            <person name="Donaldson S."/>
            <person name="Sehra H."/>
            <person name="Almeida-King J."/>
            <person name="Loveland J."/>
            <person name="Trevanion S."/>
            <person name="Jones M."/>
            <person name="Quail M."/>
            <person name="Willey D."/>
            <person name="Hunt A."/>
            <person name="Burton J."/>
            <person name="Sims S."/>
            <person name="McLay K."/>
            <person name="Plumb B."/>
            <person name="Davis J."/>
            <person name="Clee C."/>
            <person name="Oliver K."/>
            <person name="Clark R."/>
            <person name="Riddle C."/>
            <person name="Elliot D."/>
            <person name="Threadgold G."/>
            <person name="Harden G."/>
            <person name="Ware D."/>
            <person name="Begum S."/>
            <person name="Mortimore B."/>
            <person name="Kerry G."/>
            <person name="Heath P."/>
            <person name="Phillimore B."/>
            <person name="Tracey A."/>
            <person name="Corby N."/>
            <person name="Dunn M."/>
            <person name="Johnson C."/>
            <person name="Wood J."/>
            <person name="Clark S."/>
            <person name="Pelan S."/>
            <person name="Griffiths G."/>
            <person name="Smith M."/>
            <person name="Glithero R."/>
            <person name="Howden P."/>
            <person name="Barker N."/>
            <person name="Lloyd C."/>
            <person name="Stevens C."/>
            <person name="Harley J."/>
            <person name="Holt K."/>
            <person name="Panagiotidis G."/>
            <person name="Lovell J."/>
            <person name="Beasley H."/>
            <person name="Henderson C."/>
            <person name="Gordon D."/>
            <person name="Auger K."/>
            <person name="Wright D."/>
            <person name="Collins J."/>
            <person name="Raisen C."/>
            <person name="Dyer L."/>
            <person name="Leung K."/>
            <person name="Robertson L."/>
            <person name="Ambridge K."/>
            <person name="Leongamornlert D."/>
            <person name="McGuire S."/>
            <person name="Gilderthorp R."/>
            <person name="Griffiths C."/>
            <person name="Manthravadi D."/>
            <person name="Nichol S."/>
            <person name="Barker G."/>
            <person name="Whitehead S."/>
            <person name="Kay M."/>
            <person name="Brown J."/>
            <person name="Murnane C."/>
            <person name="Gray E."/>
            <person name="Humphries M."/>
            <person name="Sycamore N."/>
            <person name="Barker D."/>
            <person name="Saunders D."/>
            <person name="Wallis J."/>
            <person name="Babbage A."/>
            <person name="Hammond S."/>
            <person name="Mashreghi-Mohammadi M."/>
            <person name="Barr L."/>
            <person name="Martin S."/>
            <person name="Wray P."/>
            <person name="Ellington A."/>
            <person name="Matthews N."/>
            <person name="Ellwood M."/>
            <person name="Woodmansey R."/>
            <person name="Clark G."/>
            <person name="Cooper J."/>
            <person name="Tromans A."/>
            <person name="Grafham D."/>
            <person name="Skuce C."/>
            <person name="Pandian R."/>
            <person name="Andrews R."/>
            <person name="Harrison E."/>
            <person name="Kimberley A."/>
            <person name="Garnett J."/>
            <person name="Fosker N."/>
            <person name="Hall R."/>
            <person name="Garner P."/>
            <person name="Kelly D."/>
            <person name="Bird C."/>
            <person name="Palmer S."/>
            <person name="Gehring I."/>
            <person name="Berger A."/>
            <person name="Dooley C.M."/>
            <person name="Ersan-Urun Z."/>
            <person name="Eser C."/>
            <person name="Geiger H."/>
            <person name="Geisler M."/>
            <person name="Karotki L."/>
            <person name="Kirn A."/>
            <person name="Konantz J."/>
            <person name="Konantz M."/>
            <person name="Oberlander M."/>
            <person name="Rudolph-Geiger S."/>
            <person name="Teucke M."/>
            <person name="Lanz C."/>
            <person name="Raddatz G."/>
            <person name="Osoegawa K."/>
            <person name="Zhu B."/>
            <person name="Rapp A."/>
            <person name="Widaa S."/>
            <person name="Langford C."/>
            <person name="Yang F."/>
            <person name="Schuster S.C."/>
            <person name="Carter N.P."/>
            <person name="Harrow J."/>
            <person name="Ning Z."/>
            <person name="Herrero J."/>
            <person name="Searle S.M."/>
            <person name="Enright A."/>
            <person name="Geisler R."/>
            <person name="Plasterk R.H."/>
            <person name="Lee C."/>
            <person name="Westerfield M."/>
            <person name="de Jong P.J."/>
            <person name="Zon L.I."/>
            <person name="Postlethwait J.H."/>
            <person name="Nusslein-Volhard C."/>
            <person name="Hubbard T.J."/>
            <person name="Roest Crollius H."/>
            <person name="Rogers J."/>
            <person name="Stemple D.L."/>
        </authorList>
    </citation>
    <scope>NUCLEOTIDE SEQUENCE [LARGE SCALE GENOMIC DNA]</scope>
    <source>
        <strain>Tuebingen</strain>
    </source>
</reference>
<reference key="3">
    <citation type="submission" date="2003-08" db="EMBL/GenBank/DDBJ databases">
        <authorList>
            <consortium name="NIH - Zebrafish Gene Collection (ZGC) project"/>
        </authorList>
    </citation>
    <scope>NUCLEOTIDE SEQUENCE [LARGE SCALE MRNA]</scope>
    <source>
        <tissue>Kidney</tissue>
    </source>
</reference>
<comment type="function">
    <text evidence="1">Ribosome-binding protein involved in ribosome hibernation: associates with translationally inactive ribosomes and stabilizes the nonrotated conformation of the 80S ribosome, thereby promoting ribosome preservation and storage.</text>
</comment>
<comment type="subunit">
    <text evidence="1">Associates with translationally inactive ribosomes in the nonrotated state.</text>
</comment>
<comment type="subcellular location">
    <subcellularLocation>
        <location evidence="1">Cytoplasm</location>
        <location evidence="1">Cytoskeleton</location>
        <location evidence="1">Microtubule organizing center</location>
        <location evidence="1">Centrosome</location>
    </subcellularLocation>
    <subcellularLocation>
        <location evidence="1">Midbody</location>
    </subcellularLocation>
    <text evidence="1">Colocalizes with gamma-tubulin at interphase, prophase, metaphase, and anaphase. Relocates from centrosome to midbody at telophase.</text>
</comment>
<comment type="similarity">
    <text evidence="4">Belongs to the CCDC124 family.</text>
</comment>
<organism>
    <name type="scientific">Danio rerio</name>
    <name type="common">Zebrafish</name>
    <name type="synonym">Brachydanio rerio</name>
    <dbReference type="NCBI Taxonomy" id="7955"/>
    <lineage>
        <taxon>Eukaryota</taxon>
        <taxon>Metazoa</taxon>
        <taxon>Chordata</taxon>
        <taxon>Craniata</taxon>
        <taxon>Vertebrata</taxon>
        <taxon>Euteleostomi</taxon>
        <taxon>Actinopterygii</taxon>
        <taxon>Neopterygii</taxon>
        <taxon>Teleostei</taxon>
        <taxon>Ostariophysi</taxon>
        <taxon>Cypriniformes</taxon>
        <taxon>Danionidae</taxon>
        <taxon>Danioninae</taxon>
        <taxon>Danio</taxon>
    </lineage>
</organism>
<keyword id="KW-0175">Coiled coil</keyword>
<keyword id="KW-0963">Cytoplasm</keyword>
<keyword id="KW-0206">Cytoskeleton</keyword>
<keyword id="KW-1185">Reference proteome</keyword>
<evidence type="ECO:0000250" key="1">
    <source>
        <dbReference type="UniProtKB" id="Q96CT7"/>
    </source>
</evidence>
<evidence type="ECO:0000255" key="2"/>
<evidence type="ECO:0000256" key="3">
    <source>
        <dbReference type="SAM" id="MobiDB-lite"/>
    </source>
</evidence>
<evidence type="ECO:0000305" key="4"/>